<reference key="1">
    <citation type="journal article" date="2009" name="Infect. Immun.">
        <title>Comparative genomics reveal extensive transposon-mediated genomic plasticity and diversity among potential effector proteins within the genus Coxiella.</title>
        <authorList>
            <person name="Beare P.A."/>
            <person name="Unsworth N."/>
            <person name="Andoh M."/>
            <person name="Voth D.E."/>
            <person name="Omsland A."/>
            <person name="Gilk S.D."/>
            <person name="Williams K.P."/>
            <person name="Sobral B.W."/>
            <person name="Kupko J.J. III"/>
            <person name="Porcella S.F."/>
            <person name="Samuel J.E."/>
            <person name="Heinzen R.A."/>
        </authorList>
    </citation>
    <scope>NUCLEOTIDE SEQUENCE [LARGE SCALE GENOMIC DNA]</scope>
    <source>
        <strain>Dugway 5J108-111</strain>
    </source>
</reference>
<accession>A9KE14</accession>
<sequence>MSEKRVEKKLIHYVKKALNDYHMINTGDRVMVCLSGGKDSYTLLSLLNSIRIEGNYKFDIFAFVLDQSQPGWDDSALRGWLDDKKIPYEILTRDTYSIVKEKIPAGKTYCSLCSRLRRGIIYRYAEEQGFSKIALGHHRDDLIQTLLMSVFYNGQIRSMPPKLLSDNKRHVLIRPLAYCQERDIIKYAMEQQFPLIPCNLCGSQKNLMRQRVKRLISDLAKENPKVPSNMLRALSNIKPSQLMDHELWNFRELNVD</sequence>
<comment type="function">
    <text evidence="1">Catalyzes the ATP-dependent 2-thiolation of cytidine in position 32 of tRNA, to form 2-thiocytidine (s(2)C32). The sulfur atoms are provided by the cysteine/cysteine desulfurase (IscS) system.</text>
</comment>
<comment type="catalytic activity">
    <reaction evidence="1">
        <text>cytidine(32) in tRNA + S-sulfanyl-L-cysteinyl-[cysteine desulfurase] + AH2 + ATP = 2-thiocytidine(32) in tRNA + L-cysteinyl-[cysteine desulfurase] + A + AMP + diphosphate + H(+)</text>
        <dbReference type="Rhea" id="RHEA:57048"/>
        <dbReference type="Rhea" id="RHEA-COMP:10288"/>
        <dbReference type="Rhea" id="RHEA-COMP:12157"/>
        <dbReference type="Rhea" id="RHEA-COMP:12158"/>
        <dbReference type="Rhea" id="RHEA-COMP:14821"/>
        <dbReference type="ChEBI" id="CHEBI:13193"/>
        <dbReference type="ChEBI" id="CHEBI:15378"/>
        <dbReference type="ChEBI" id="CHEBI:17499"/>
        <dbReference type="ChEBI" id="CHEBI:29950"/>
        <dbReference type="ChEBI" id="CHEBI:30616"/>
        <dbReference type="ChEBI" id="CHEBI:33019"/>
        <dbReference type="ChEBI" id="CHEBI:61963"/>
        <dbReference type="ChEBI" id="CHEBI:82748"/>
        <dbReference type="ChEBI" id="CHEBI:141453"/>
        <dbReference type="ChEBI" id="CHEBI:456215"/>
    </reaction>
    <physiologicalReaction direction="left-to-right" evidence="1">
        <dbReference type="Rhea" id="RHEA:57049"/>
    </physiologicalReaction>
</comment>
<comment type="cofactor">
    <cofactor evidence="1">
        <name>Mg(2+)</name>
        <dbReference type="ChEBI" id="CHEBI:18420"/>
    </cofactor>
</comment>
<comment type="cofactor">
    <cofactor evidence="1">
        <name>[4Fe-4S] cluster</name>
        <dbReference type="ChEBI" id="CHEBI:49883"/>
    </cofactor>
    <text evidence="1">Binds 1 [4Fe-4S] cluster per subunit. The cluster is chelated by three Cys residues, the fourth Fe has a free coordination site that may bind a sulfur atom transferred from the persulfide of IscS.</text>
</comment>
<comment type="pathway">
    <text evidence="1">tRNA modification.</text>
</comment>
<comment type="subunit">
    <text evidence="1">Homodimer.</text>
</comment>
<comment type="subcellular location">
    <subcellularLocation>
        <location evidence="1">Cytoplasm</location>
    </subcellularLocation>
</comment>
<comment type="miscellaneous">
    <text evidence="1">The thiolation reaction likely consists of two steps: a first activation step by ATP to form an adenylated intermediate of the target base of tRNA, and a second nucleophilic substitution step of the sulfur (S) atom supplied by the hydrosulfide attached to the Fe-S cluster.</text>
</comment>
<comment type="similarity">
    <text evidence="1">Belongs to the TtcA family.</text>
</comment>
<evidence type="ECO:0000255" key="1">
    <source>
        <dbReference type="HAMAP-Rule" id="MF_01850"/>
    </source>
</evidence>
<keyword id="KW-0004">4Fe-4S</keyword>
<keyword id="KW-0067">ATP-binding</keyword>
<keyword id="KW-0963">Cytoplasm</keyword>
<keyword id="KW-0408">Iron</keyword>
<keyword id="KW-0411">Iron-sulfur</keyword>
<keyword id="KW-0460">Magnesium</keyword>
<keyword id="KW-0479">Metal-binding</keyword>
<keyword id="KW-0547">Nucleotide-binding</keyword>
<keyword id="KW-0694">RNA-binding</keyword>
<keyword id="KW-0808">Transferase</keyword>
<keyword id="KW-0819">tRNA processing</keyword>
<keyword id="KW-0820">tRNA-binding</keyword>
<proteinExistence type="inferred from homology"/>
<protein>
    <recommendedName>
        <fullName evidence="1">tRNA-cytidine(32) 2-sulfurtransferase</fullName>
        <ecNumber evidence="1">2.8.1.-</ecNumber>
    </recommendedName>
    <alternativeName>
        <fullName evidence="1">Two-thiocytidine biosynthesis protein A</fullName>
    </alternativeName>
    <alternativeName>
        <fullName evidence="1">tRNA 2-thiocytidine biosynthesis protein TtcA</fullName>
    </alternativeName>
</protein>
<feature type="chain" id="PRO_0000348704" description="tRNA-cytidine(32) 2-sulfurtransferase">
    <location>
        <begin position="1"/>
        <end position="256"/>
    </location>
</feature>
<feature type="short sequence motif" description="PP-loop motif" evidence="1">
    <location>
        <begin position="35"/>
        <end position="40"/>
    </location>
</feature>
<feature type="binding site" evidence="1">
    <location>
        <position position="110"/>
    </location>
    <ligand>
        <name>[4Fe-4S] cluster</name>
        <dbReference type="ChEBI" id="CHEBI:49883"/>
    </ligand>
</feature>
<feature type="binding site" evidence="1">
    <location>
        <position position="113"/>
    </location>
    <ligand>
        <name>[4Fe-4S] cluster</name>
        <dbReference type="ChEBI" id="CHEBI:49883"/>
    </ligand>
</feature>
<feature type="binding site" evidence="1">
    <location>
        <position position="201"/>
    </location>
    <ligand>
        <name>[4Fe-4S] cluster</name>
        <dbReference type="ChEBI" id="CHEBI:49883"/>
    </ligand>
</feature>
<name>TTCA_COXBN</name>
<dbReference type="EC" id="2.8.1.-" evidence="1"/>
<dbReference type="EMBL" id="CP000733">
    <property type="protein sequence ID" value="ABS76546.1"/>
    <property type="molecule type" value="Genomic_DNA"/>
</dbReference>
<dbReference type="SMR" id="A9KE14"/>
<dbReference type="KEGG" id="cbd:CBUD_1167"/>
<dbReference type="HOGENOM" id="CLU_026481_0_0_6"/>
<dbReference type="Proteomes" id="UP000008555">
    <property type="component" value="Chromosome"/>
</dbReference>
<dbReference type="GO" id="GO:0005737">
    <property type="term" value="C:cytoplasm"/>
    <property type="evidence" value="ECO:0007669"/>
    <property type="project" value="UniProtKB-SubCell"/>
</dbReference>
<dbReference type="GO" id="GO:0051539">
    <property type="term" value="F:4 iron, 4 sulfur cluster binding"/>
    <property type="evidence" value="ECO:0007669"/>
    <property type="project" value="UniProtKB-UniRule"/>
</dbReference>
<dbReference type="GO" id="GO:0005524">
    <property type="term" value="F:ATP binding"/>
    <property type="evidence" value="ECO:0007669"/>
    <property type="project" value="UniProtKB-UniRule"/>
</dbReference>
<dbReference type="GO" id="GO:0000287">
    <property type="term" value="F:magnesium ion binding"/>
    <property type="evidence" value="ECO:0007669"/>
    <property type="project" value="UniProtKB-UniRule"/>
</dbReference>
<dbReference type="GO" id="GO:0016783">
    <property type="term" value="F:sulfurtransferase activity"/>
    <property type="evidence" value="ECO:0007669"/>
    <property type="project" value="UniProtKB-UniRule"/>
</dbReference>
<dbReference type="GO" id="GO:0000049">
    <property type="term" value="F:tRNA binding"/>
    <property type="evidence" value="ECO:0007669"/>
    <property type="project" value="UniProtKB-KW"/>
</dbReference>
<dbReference type="GO" id="GO:0034227">
    <property type="term" value="P:tRNA thio-modification"/>
    <property type="evidence" value="ECO:0007669"/>
    <property type="project" value="UniProtKB-UniRule"/>
</dbReference>
<dbReference type="CDD" id="cd24138">
    <property type="entry name" value="TtcA-like"/>
    <property type="match status" value="1"/>
</dbReference>
<dbReference type="Gene3D" id="3.40.50.620">
    <property type="entry name" value="HUPs"/>
    <property type="match status" value="1"/>
</dbReference>
<dbReference type="HAMAP" id="MF_01850">
    <property type="entry name" value="TtcA"/>
    <property type="match status" value="1"/>
</dbReference>
<dbReference type="InterPro" id="IPR014729">
    <property type="entry name" value="Rossmann-like_a/b/a_fold"/>
</dbReference>
<dbReference type="InterPro" id="IPR011063">
    <property type="entry name" value="TilS/TtcA_N"/>
</dbReference>
<dbReference type="InterPro" id="IPR012089">
    <property type="entry name" value="tRNA_Cyd_32_2_STrfase"/>
</dbReference>
<dbReference type="InterPro" id="IPR035107">
    <property type="entry name" value="tRNA_thiolation_TtcA_Ctu1"/>
</dbReference>
<dbReference type="NCBIfam" id="NF007972">
    <property type="entry name" value="PRK10696.1"/>
    <property type="match status" value="1"/>
</dbReference>
<dbReference type="PANTHER" id="PTHR43686:SF1">
    <property type="entry name" value="AMINOTRAN_5 DOMAIN-CONTAINING PROTEIN"/>
    <property type="match status" value="1"/>
</dbReference>
<dbReference type="PANTHER" id="PTHR43686">
    <property type="entry name" value="SULFURTRANSFERASE-RELATED"/>
    <property type="match status" value="1"/>
</dbReference>
<dbReference type="Pfam" id="PF01171">
    <property type="entry name" value="ATP_bind_3"/>
    <property type="match status" value="1"/>
</dbReference>
<dbReference type="PIRSF" id="PIRSF004976">
    <property type="entry name" value="ATPase_YdaO"/>
    <property type="match status" value="1"/>
</dbReference>
<dbReference type="SUPFAM" id="SSF52402">
    <property type="entry name" value="Adenine nucleotide alpha hydrolases-like"/>
    <property type="match status" value="1"/>
</dbReference>
<gene>
    <name evidence="1" type="primary">ttcA</name>
    <name type="ordered locus">CBUD_1167</name>
</gene>
<organism>
    <name type="scientific">Coxiella burnetii (strain Dugway 5J108-111)</name>
    <dbReference type="NCBI Taxonomy" id="434922"/>
    <lineage>
        <taxon>Bacteria</taxon>
        <taxon>Pseudomonadati</taxon>
        <taxon>Pseudomonadota</taxon>
        <taxon>Gammaproteobacteria</taxon>
        <taxon>Legionellales</taxon>
        <taxon>Coxiellaceae</taxon>
        <taxon>Coxiella</taxon>
    </lineage>
</organism>